<feature type="chain" id="PRO_0000405244" description="Mitotic spindle assembly checkpoint protein MAD2B">
    <location>
        <begin position="1"/>
        <end position="211"/>
    </location>
</feature>
<feature type="domain" description="HORMA" evidence="3">
    <location>
        <begin position="13"/>
        <end position="203"/>
    </location>
</feature>
<feature type="region of interest" description="Mediates interaction with REV1 and REV3L and homodimerization" evidence="1">
    <location>
        <begin position="21"/>
        <end position="155"/>
    </location>
</feature>
<feature type="splice variant" id="VSP_040650" description="In isoform 2." evidence="4">
    <original>NSDSLLSHVEQLLRAFILKISVCDAVLDHNPPGCTFTVLVHTREAATRNMEKIQVIKDFPWILADEQDVHMHDPRLIPLKTMTSDILKMQLYVEERAHKNS</original>
    <variation>KLGGLKQTVSLTVLGSWRYADLSGTLGVLSTAEYLSDLKGPLYPTSIQSVQTPSCLMWSSCFEPSFLRLVCVTLSSTIILQAARLQFSCTQEKLPLGTWRRYRSSRTSPGSWQMSKMSTCMIPG</variation>
    <location>
        <begin position="111"/>
        <end position="211"/>
    </location>
</feature>
<organism>
    <name type="scientific">Rattus norvegicus</name>
    <name type="common">Rat</name>
    <dbReference type="NCBI Taxonomy" id="10116"/>
    <lineage>
        <taxon>Eukaryota</taxon>
        <taxon>Metazoa</taxon>
        <taxon>Chordata</taxon>
        <taxon>Craniata</taxon>
        <taxon>Vertebrata</taxon>
        <taxon>Euteleostomi</taxon>
        <taxon>Mammalia</taxon>
        <taxon>Eutheria</taxon>
        <taxon>Euarchontoglires</taxon>
        <taxon>Glires</taxon>
        <taxon>Rodentia</taxon>
        <taxon>Myomorpha</taxon>
        <taxon>Muroidea</taxon>
        <taxon>Muridae</taxon>
        <taxon>Murinae</taxon>
        <taxon>Rattus</taxon>
    </lineage>
</organism>
<proteinExistence type="evidence at transcript level"/>
<dbReference type="EMBL" id="CH473968">
    <property type="protein sequence ID" value="EDL81101.1"/>
    <property type="molecule type" value="Genomic_DNA"/>
</dbReference>
<dbReference type="EMBL" id="BC087687">
    <property type="protein sequence ID" value="AAH87687.1"/>
    <property type="molecule type" value="mRNA"/>
</dbReference>
<dbReference type="RefSeq" id="NP_001012106.1">
    <molecule id="D3Z8D9-2"/>
    <property type="nucleotide sequence ID" value="NM_001012106.2"/>
</dbReference>
<dbReference type="RefSeq" id="NP_001381170.1">
    <molecule id="D3Z8D9-1"/>
    <property type="nucleotide sequence ID" value="NM_001394241.1"/>
</dbReference>
<dbReference type="RefSeq" id="XP_006239452.1">
    <property type="nucleotide sequence ID" value="XM_006239390.3"/>
</dbReference>
<dbReference type="RefSeq" id="XP_006239453.1">
    <property type="nucleotide sequence ID" value="XM_006239391.3"/>
</dbReference>
<dbReference type="RefSeq" id="XP_008762478.1">
    <property type="nucleotide sequence ID" value="XM_008764256.2"/>
</dbReference>
<dbReference type="RefSeq" id="XP_038966023.1">
    <molecule id="D3Z8D9-1"/>
    <property type="nucleotide sequence ID" value="XM_039110095.2"/>
</dbReference>
<dbReference type="RefSeq" id="XP_063143894.1">
    <molecule id="D3Z8D9-2"/>
    <property type="nucleotide sequence ID" value="XM_063287824.1"/>
</dbReference>
<dbReference type="RefSeq" id="XP_063143895.1">
    <molecule id="D3Z8D9-2"/>
    <property type="nucleotide sequence ID" value="XM_063287825.1"/>
</dbReference>
<dbReference type="RefSeq" id="XP_063143896.1">
    <molecule id="D3Z8D9-2"/>
    <property type="nucleotide sequence ID" value="XM_063287826.1"/>
</dbReference>
<dbReference type="RefSeq" id="XP_063143897.1">
    <molecule id="D3Z8D9-2"/>
    <property type="nucleotide sequence ID" value="XM_063287827.1"/>
</dbReference>
<dbReference type="RefSeq" id="XP_063143898.1">
    <molecule id="D3Z8D9-1"/>
    <property type="nucleotide sequence ID" value="XM_063287828.1"/>
</dbReference>
<dbReference type="RefSeq" id="XP_063143899.1">
    <molecule id="D3Z8D9-1"/>
    <property type="nucleotide sequence ID" value="XM_063287829.1"/>
</dbReference>
<dbReference type="RefSeq" id="XP_063143900.1">
    <molecule id="D3Z8D9-1"/>
    <property type="nucleotide sequence ID" value="XM_063287830.1"/>
</dbReference>
<dbReference type="RefSeq" id="XP_063143901.1">
    <molecule id="D3Z8D9-1"/>
    <property type="nucleotide sequence ID" value="XM_063287831.1"/>
</dbReference>
<dbReference type="SMR" id="D3Z8D9"/>
<dbReference type="FunCoup" id="D3Z8D9">
    <property type="interactions" value="1331"/>
</dbReference>
<dbReference type="STRING" id="10116.ENSRNOP00000052521"/>
<dbReference type="PhosphoSitePlus" id="D3Z8D9"/>
<dbReference type="PaxDb" id="10116-ENSRNOP00000052521"/>
<dbReference type="Ensembl" id="ENSRNOT00000055658.5">
    <molecule id="D3Z8D9-2"/>
    <property type="protein sequence ID" value="ENSRNOP00000052521.1"/>
    <property type="gene ID" value="ENSRNOG00000009134.9"/>
</dbReference>
<dbReference type="Ensembl" id="ENSRNOT00000083678.2">
    <molecule id="D3Z8D9-1"/>
    <property type="protein sequence ID" value="ENSRNOP00000070808.1"/>
    <property type="gene ID" value="ENSRNOG00000009134.9"/>
</dbReference>
<dbReference type="GeneID" id="313702"/>
<dbReference type="KEGG" id="rno:313702"/>
<dbReference type="AGR" id="RGD:1307499"/>
<dbReference type="CTD" id="10459"/>
<dbReference type="RGD" id="1307499">
    <property type="gene designation" value="Mad2l2"/>
</dbReference>
<dbReference type="eggNOG" id="KOG3186">
    <property type="taxonomic scope" value="Eukaryota"/>
</dbReference>
<dbReference type="GeneTree" id="ENSGT00940000153395"/>
<dbReference type="HOGENOM" id="CLU_1184726_0_0_1"/>
<dbReference type="InParanoid" id="D3Z8D9"/>
<dbReference type="OMA" id="CEDFPWI"/>
<dbReference type="PhylomeDB" id="D3Z8D9"/>
<dbReference type="TreeFam" id="TF101085"/>
<dbReference type="Reactome" id="R-RNO-110312">
    <property type="pathway name" value="Translesion synthesis by REV1"/>
</dbReference>
<dbReference type="Reactome" id="R-RNO-5655862">
    <property type="pathway name" value="Translesion synthesis by POLK"/>
</dbReference>
<dbReference type="Reactome" id="R-RNO-5656121">
    <property type="pathway name" value="Translesion synthesis by POLI"/>
</dbReference>
<dbReference type="PRO" id="PR:D3Z8D9"/>
<dbReference type="Proteomes" id="UP000002494">
    <property type="component" value="Chromosome 5"/>
</dbReference>
<dbReference type="Proteomes" id="UP000234681">
    <property type="component" value="Chromosome 5"/>
</dbReference>
<dbReference type="Bgee" id="ENSRNOG00000009134">
    <property type="expression patterns" value="Expressed in ovary and 20 other cell types or tissues"/>
</dbReference>
<dbReference type="ExpressionAtlas" id="D3Z8D9">
    <property type="expression patterns" value="baseline and differential"/>
</dbReference>
<dbReference type="GO" id="GO:0005680">
    <property type="term" value="C:anaphase-promoting complex"/>
    <property type="evidence" value="ECO:0000266"/>
    <property type="project" value="RGD"/>
</dbReference>
<dbReference type="GO" id="GO:0005737">
    <property type="term" value="C:cytoplasm"/>
    <property type="evidence" value="ECO:0007669"/>
    <property type="project" value="UniProtKB-SubCell"/>
</dbReference>
<dbReference type="GO" id="GO:0005634">
    <property type="term" value="C:nucleus"/>
    <property type="evidence" value="ECO:0000250"/>
    <property type="project" value="UniProtKB"/>
</dbReference>
<dbReference type="GO" id="GO:0005819">
    <property type="term" value="C:spindle"/>
    <property type="evidence" value="ECO:0000250"/>
    <property type="project" value="UniProtKB"/>
</dbReference>
<dbReference type="GO" id="GO:0016035">
    <property type="term" value="C:zeta DNA polymerase complex"/>
    <property type="evidence" value="ECO:0000250"/>
    <property type="project" value="UniProtKB"/>
</dbReference>
<dbReference type="GO" id="GO:0008432">
    <property type="term" value="F:JUN kinase binding"/>
    <property type="evidence" value="ECO:0000250"/>
    <property type="project" value="UniProtKB"/>
</dbReference>
<dbReference type="GO" id="GO:0061629">
    <property type="term" value="F:RNA polymerase II-specific DNA-binding transcription factor binding"/>
    <property type="evidence" value="ECO:0000266"/>
    <property type="project" value="RGD"/>
</dbReference>
<dbReference type="GO" id="GO:0007015">
    <property type="term" value="P:actin filament organization"/>
    <property type="evidence" value="ECO:0000266"/>
    <property type="project" value="RGD"/>
</dbReference>
<dbReference type="GO" id="GO:0051301">
    <property type="term" value="P:cell division"/>
    <property type="evidence" value="ECO:0007669"/>
    <property type="project" value="UniProtKB-KW"/>
</dbReference>
<dbReference type="GO" id="GO:0042772">
    <property type="term" value="P:DNA damage response, signal transduction resulting in transcription"/>
    <property type="evidence" value="ECO:0000250"/>
    <property type="project" value="UniProtKB"/>
</dbReference>
<dbReference type="GO" id="GO:0006302">
    <property type="term" value="P:double-strand break repair"/>
    <property type="evidence" value="ECO:0000250"/>
    <property type="project" value="UniProtKB"/>
</dbReference>
<dbReference type="GO" id="GO:0042276">
    <property type="term" value="P:error-prone translesion synthesis"/>
    <property type="evidence" value="ECO:0000266"/>
    <property type="project" value="RGD"/>
</dbReference>
<dbReference type="GO" id="GO:0090090">
    <property type="term" value="P:negative regulation of canonical Wnt signaling pathway"/>
    <property type="evidence" value="ECO:0000266"/>
    <property type="project" value="RGD"/>
</dbReference>
<dbReference type="GO" id="GO:2000048">
    <property type="term" value="P:negative regulation of cell-cell adhesion mediated by cadherin"/>
    <property type="evidence" value="ECO:0000266"/>
    <property type="project" value="RGD"/>
</dbReference>
<dbReference type="GO" id="GO:2000042">
    <property type="term" value="P:negative regulation of double-strand break repair via homologous recombination"/>
    <property type="evidence" value="ECO:0000266"/>
    <property type="project" value="RGD"/>
</dbReference>
<dbReference type="GO" id="GO:0010719">
    <property type="term" value="P:negative regulation of epithelial to mesenchymal transition"/>
    <property type="evidence" value="ECO:0000266"/>
    <property type="project" value="RGD"/>
</dbReference>
<dbReference type="GO" id="GO:0042177">
    <property type="term" value="P:negative regulation of protein catabolic process"/>
    <property type="evidence" value="ECO:0000250"/>
    <property type="project" value="UniProtKB"/>
</dbReference>
<dbReference type="GO" id="GO:0010944">
    <property type="term" value="P:negative regulation of transcription by competitive promoter binding"/>
    <property type="evidence" value="ECO:0000266"/>
    <property type="project" value="RGD"/>
</dbReference>
<dbReference type="GO" id="GO:0000122">
    <property type="term" value="P:negative regulation of transcription by RNA polymerase II"/>
    <property type="evidence" value="ECO:0000266"/>
    <property type="project" value="RGD"/>
</dbReference>
<dbReference type="GO" id="GO:1904667">
    <property type="term" value="P:negative regulation of ubiquitin protein ligase activity"/>
    <property type="evidence" value="ECO:0000250"/>
    <property type="project" value="UniProtKB"/>
</dbReference>
<dbReference type="GO" id="GO:0045893">
    <property type="term" value="P:positive regulation of DNA-templated transcription"/>
    <property type="evidence" value="ECO:0000250"/>
    <property type="project" value="UniProtKB"/>
</dbReference>
<dbReference type="GO" id="GO:2001034">
    <property type="term" value="P:positive regulation of double-strand break repair via nonhomologous end joining"/>
    <property type="evidence" value="ECO:0000266"/>
    <property type="project" value="RGD"/>
</dbReference>
<dbReference type="GO" id="GO:0010718">
    <property type="term" value="P:positive regulation of epithelial to mesenchymal transition"/>
    <property type="evidence" value="ECO:0000315"/>
    <property type="project" value="RGD"/>
</dbReference>
<dbReference type="GO" id="GO:1901203">
    <property type="term" value="P:positive regulation of extracellular matrix assembly"/>
    <property type="evidence" value="ECO:0000315"/>
    <property type="project" value="RGD"/>
</dbReference>
<dbReference type="GO" id="GO:0010628">
    <property type="term" value="P:positive regulation of gene expression"/>
    <property type="evidence" value="ECO:0000315"/>
    <property type="project" value="RGD"/>
</dbReference>
<dbReference type="GO" id="GO:0045830">
    <property type="term" value="P:positive regulation of isotype switching"/>
    <property type="evidence" value="ECO:0000266"/>
    <property type="project" value="RGD"/>
</dbReference>
<dbReference type="GO" id="GO:0033138">
    <property type="term" value="P:positive regulation of peptidyl-serine phosphorylation"/>
    <property type="evidence" value="ECO:0000250"/>
    <property type="project" value="UniProtKB"/>
</dbReference>
<dbReference type="GO" id="GO:0001558">
    <property type="term" value="P:regulation of cell growth"/>
    <property type="evidence" value="ECO:0000250"/>
    <property type="project" value="UniProtKB"/>
</dbReference>
<dbReference type="FunFam" id="3.30.900.10:FF:000003">
    <property type="entry name" value="Mitotic spindle assembly checkpoint protein MAD2B"/>
    <property type="match status" value="1"/>
</dbReference>
<dbReference type="Gene3D" id="3.30.900.10">
    <property type="entry name" value="HORMA domain"/>
    <property type="match status" value="1"/>
</dbReference>
<dbReference type="InterPro" id="IPR003511">
    <property type="entry name" value="HORMA_dom"/>
</dbReference>
<dbReference type="InterPro" id="IPR036570">
    <property type="entry name" value="HORMA_dom_sf"/>
</dbReference>
<dbReference type="InterPro" id="IPR045091">
    <property type="entry name" value="Mad2-like"/>
</dbReference>
<dbReference type="PANTHER" id="PTHR11842">
    <property type="entry name" value="MITOTIC SPINDLE ASSEMBLY CHECKPOINT PROTEIN MAD2"/>
    <property type="match status" value="1"/>
</dbReference>
<dbReference type="PANTHER" id="PTHR11842:SF15">
    <property type="entry name" value="MITOTIC SPINDLE ASSEMBLY CHECKPOINT PROTEIN MAD2B"/>
    <property type="match status" value="1"/>
</dbReference>
<dbReference type="Pfam" id="PF02301">
    <property type="entry name" value="HORMA"/>
    <property type="match status" value="1"/>
</dbReference>
<dbReference type="SUPFAM" id="SSF56019">
    <property type="entry name" value="The spindle assembly checkpoint protein mad2"/>
    <property type="match status" value="1"/>
</dbReference>
<dbReference type="PROSITE" id="PS50815">
    <property type="entry name" value="HORMA"/>
    <property type="match status" value="1"/>
</dbReference>
<comment type="function">
    <text evidence="2">Adapter protein able to interact with different proteins and involved in different biological processes. Mediates the interaction between the error-prone DNA polymerase zeta catalytic subunit REV3L and the inserter polymerase REV1, thereby mediating the second polymerase switching in translesion DNA synthesis. Translesion DNA synthesis releases the replication blockade of replicative polymerases, stalled in presence of DNA lesions. Component of the shieldin complex, which plays an important role in repair of DNA double-stranded breaks (DSBs). During G1 and S phase of the cell cycle, the complex functions downstream of TP53BP1 to promote non-homologous end joining (NHEJ) and suppress DNA end resection. Mediates various NHEJ-dependent processes including immunoglobulin class-switch recombination, and fusion of unprotected telomeres. May also regulate another aspect of cellular response to DNA damage through regulation of the JNK-mediated phosphorylation and activation of the transcriptional activator ELK1. Inhibits the FZR1- and probably CDC20-mediated activation of the anaphase promoting complex APC thereby regulating progression through the cell cycle. Regulates TCF7L2-mediated gene transcription and may play a role in epithelial-mesenchymal transdifferentiation.</text>
</comment>
<comment type="subunit">
    <text evidence="2">Homooligomer. Heterodimer with REV3L. This dimer forms the minimal DNA polymerase zeta complex (Pol-zeta2), with REV3L bearing DNA polymerase catalytic activity, although its activity is very low in this context. Component of the tetrameric Pol-zeta complex (Pol-zeta4), which consists of REV3L, MAD2L2, POLD2 and POLD3; Pol-zeta4 is the fully active form of DNA polymerase zeta. Component of the shieldin complex, consisting of SHLD1, SHLD2, SHLD3 and MAD2L2/REV7. Within the complex, SHLD2 forms a scaffold which interacts with a SHLD3-MAD2L2 subcomplex via its N-terminus, and with SHLD1 via its C-terminus. Interacts with REV1. Interacts with ADAM9. Interacts with CHAMP1. Interacts with FZR1 (in complex with the anaphase promoting complex APC). May interact with CDC20. Interacts with RAN. Interacts with ELK1; the interaction is direct and recruits MAD2L2 to ELK1-specific promoters. May interact with the JNK kinases MAPK8 and/or MAPK9 to stimulate ELK1 phosphorylation and transcriptional activity upon DNA damage. Interacts with TCF7L2; prevents its binding to promoters and negatively modulates its transcriptional activity. Interacts with YY1AP1. Interacts with PRCC; the interaction is direct. Interacts with POGZ. Interacts with ASTE1.</text>
</comment>
<comment type="subcellular location">
    <subcellularLocation>
        <location evidence="1">Nucleus</location>
    </subcellularLocation>
    <subcellularLocation>
        <location evidence="1">Cytoplasm</location>
        <location evidence="1">Cytoskeleton</location>
        <location evidence="1">Spindle</location>
    </subcellularLocation>
    <subcellularLocation>
        <location evidence="1">Cytoplasm</location>
    </subcellularLocation>
</comment>
<comment type="alternative products">
    <event type="alternative splicing"/>
    <isoform>
        <id>D3Z8D9-1</id>
        <name>1</name>
        <sequence type="displayed"/>
    </isoform>
    <isoform>
        <id>D3Z8D9-2</id>
        <name>2</name>
        <sequence type="described" ref="VSP_040650"/>
    </isoform>
</comment>
<evidence type="ECO:0000250" key="1"/>
<evidence type="ECO:0000250" key="2">
    <source>
        <dbReference type="UniProtKB" id="Q9UI95"/>
    </source>
</evidence>
<evidence type="ECO:0000255" key="3">
    <source>
        <dbReference type="PROSITE-ProRule" id="PRU00109"/>
    </source>
</evidence>
<evidence type="ECO:0000303" key="4">
    <source>
    </source>
</evidence>
<reference key="1">
    <citation type="submission" date="2005-07" db="EMBL/GenBank/DDBJ databases">
        <authorList>
            <person name="Mural R.J."/>
            <person name="Adams M.D."/>
            <person name="Myers E.W."/>
            <person name="Smith H.O."/>
            <person name="Venter J.C."/>
        </authorList>
    </citation>
    <scope>NUCLEOTIDE SEQUENCE [LARGE SCALE GENOMIC DNA]</scope>
    <source>
        <strain>Brown Norway</strain>
    </source>
</reference>
<reference key="2">
    <citation type="journal article" date="2004" name="Genome Res.">
        <title>The status, quality, and expansion of the NIH full-length cDNA project: the Mammalian Gene Collection (MGC).</title>
        <authorList>
            <consortium name="The MGC Project Team"/>
        </authorList>
    </citation>
    <scope>NUCLEOTIDE SEQUENCE [LARGE SCALE MRNA] (ISOFORM 2)</scope>
    <source>
        <tissue>Ovary</tissue>
    </source>
</reference>
<name>MD2L2_RAT</name>
<accession>D3Z8D9</accession>
<accession>Q5PPH8</accession>
<gene>
    <name type="primary">Mad2l2</name>
</gene>
<protein>
    <recommendedName>
        <fullName>Mitotic spindle assembly checkpoint protein MAD2B</fullName>
    </recommendedName>
    <alternativeName>
        <fullName>Mitotic arrest deficient 2-like protein 2</fullName>
        <shortName>MAD2-like protein 2</shortName>
    </alternativeName>
</protein>
<keyword id="KW-0025">Alternative splicing</keyword>
<keyword id="KW-0131">Cell cycle</keyword>
<keyword id="KW-0132">Cell division</keyword>
<keyword id="KW-0963">Cytoplasm</keyword>
<keyword id="KW-0206">Cytoskeleton</keyword>
<keyword id="KW-0227">DNA damage</keyword>
<keyword id="KW-0498">Mitosis</keyword>
<keyword id="KW-0539">Nucleus</keyword>
<keyword id="KW-1185">Reference proteome</keyword>
<keyword id="KW-0804">Transcription</keyword>
<keyword id="KW-0805">Transcription regulation</keyword>
<sequence>MTTLTRQDLNFGQVVADVLSEFLEVAVHLILYVREVYPVGIFQKRKKYNVPVQMSCHPELNQYIQDTLHCVKPLLEKNDVEKVVVVILDKEHRPVEKFVFEITQPPLLSINSDSLLSHVEQLLRAFILKISVCDAVLDHNPPGCTFTVLVHTREAATRNMEKIQVIKDFPWILADEQDVHMHDPRLIPLKTMTSDILKMQLYVEERAHKNS</sequence>